<keyword id="KW-0687">Ribonucleoprotein</keyword>
<keyword id="KW-0689">Ribosomal protein</keyword>
<keyword id="KW-0694">RNA-binding</keyword>
<keyword id="KW-0699">rRNA-binding</keyword>
<gene>
    <name evidence="1" type="primary">rpsC</name>
    <name type="ordered locus">SA2041</name>
</gene>
<dbReference type="EMBL" id="BA000018">
    <property type="protein sequence ID" value="BAB43336.1"/>
    <property type="molecule type" value="Genomic_DNA"/>
</dbReference>
<dbReference type="PIR" id="G90021">
    <property type="entry name" value="G90021"/>
</dbReference>
<dbReference type="RefSeq" id="WP_000529877.1">
    <property type="nucleotide sequence ID" value="NC_002745.2"/>
</dbReference>
<dbReference type="SMR" id="P66553"/>
<dbReference type="EnsemblBacteria" id="BAB43336">
    <property type="protein sequence ID" value="BAB43336"/>
    <property type="gene ID" value="BAB43336"/>
</dbReference>
<dbReference type="GeneID" id="98346556"/>
<dbReference type="KEGG" id="sau:SA2041"/>
<dbReference type="HOGENOM" id="CLU_058591_0_2_9"/>
<dbReference type="GO" id="GO:0022627">
    <property type="term" value="C:cytosolic small ribosomal subunit"/>
    <property type="evidence" value="ECO:0007669"/>
    <property type="project" value="TreeGrafter"/>
</dbReference>
<dbReference type="GO" id="GO:0003729">
    <property type="term" value="F:mRNA binding"/>
    <property type="evidence" value="ECO:0007669"/>
    <property type="project" value="UniProtKB-UniRule"/>
</dbReference>
<dbReference type="GO" id="GO:0019843">
    <property type="term" value="F:rRNA binding"/>
    <property type="evidence" value="ECO:0007669"/>
    <property type="project" value="UniProtKB-UniRule"/>
</dbReference>
<dbReference type="GO" id="GO:0003735">
    <property type="term" value="F:structural constituent of ribosome"/>
    <property type="evidence" value="ECO:0007669"/>
    <property type="project" value="InterPro"/>
</dbReference>
<dbReference type="GO" id="GO:0006412">
    <property type="term" value="P:translation"/>
    <property type="evidence" value="ECO:0007669"/>
    <property type="project" value="UniProtKB-UniRule"/>
</dbReference>
<dbReference type="CDD" id="cd02412">
    <property type="entry name" value="KH-II_30S_S3"/>
    <property type="match status" value="1"/>
</dbReference>
<dbReference type="FunFam" id="3.30.1140.32:FF:000001">
    <property type="entry name" value="30S ribosomal protein S3"/>
    <property type="match status" value="1"/>
</dbReference>
<dbReference type="FunFam" id="3.30.300.20:FF:000001">
    <property type="entry name" value="30S ribosomal protein S3"/>
    <property type="match status" value="1"/>
</dbReference>
<dbReference type="Gene3D" id="3.30.300.20">
    <property type="match status" value="1"/>
</dbReference>
<dbReference type="Gene3D" id="3.30.1140.32">
    <property type="entry name" value="Ribosomal protein S3, C-terminal domain"/>
    <property type="match status" value="1"/>
</dbReference>
<dbReference type="HAMAP" id="MF_01309_B">
    <property type="entry name" value="Ribosomal_uS3_B"/>
    <property type="match status" value="1"/>
</dbReference>
<dbReference type="InterPro" id="IPR004087">
    <property type="entry name" value="KH_dom"/>
</dbReference>
<dbReference type="InterPro" id="IPR015946">
    <property type="entry name" value="KH_dom-like_a/b"/>
</dbReference>
<dbReference type="InterPro" id="IPR004044">
    <property type="entry name" value="KH_dom_type_2"/>
</dbReference>
<dbReference type="InterPro" id="IPR009019">
    <property type="entry name" value="KH_sf_prok-type"/>
</dbReference>
<dbReference type="InterPro" id="IPR036419">
    <property type="entry name" value="Ribosomal_S3_C_sf"/>
</dbReference>
<dbReference type="InterPro" id="IPR005704">
    <property type="entry name" value="Ribosomal_uS3_bac-typ"/>
</dbReference>
<dbReference type="InterPro" id="IPR001351">
    <property type="entry name" value="Ribosomal_uS3_C"/>
</dbReference>
<dbReference type="InterPro" id="IPR018280">
    <property type="entry name" value="Ribosomal_uS3_CS"/>
</dbReference>
<dbReference type="NCBIfam" id="TIGR01009">
    <property type="entry name" value="rpsC_bact"/>
    <property type="match status" value="1"/>
</dbReference>
<dbReference type="PANTHER" id="PTHR11760">
    <property type="entry name" value="30S/40S RIBOSOMAL PROTEIN S3"/>
    <property type="match status" value="1"/>
</dbReference>
<dbReference type="PANTHER" id="PTHR11760:SF19">
    <property type="entry name" value="SMALL RIBOSOMAL SUBUNIT PROTEIN US3C"/>
    <property type="match status" value="1"/>
</dbReference>
<dbReference type="Pfam" id="PF07650">
    <property type="entry name" value="KH_2"/>
    <property type="match status" value="1"/>
</dbReference>
<dbReference type="Pfam" id="PF00189">
    <property type="entry name" value="Ribosomal_S3_C"/>
    <property type="match status" value="1"/>
</dbReference>
<dbReference type="SMART" id="SM00322">
    <property type="entry name" value="KH"/>
    <property type="match status" value="1"/>
</dbReference>
<dbReference type="SUPFAM" id="SSF54814">
    <property type="entry name" value="Prokaryotic type KH domain (KH-domain type II)"/>
    <property type="match status" value="1"/>
</dbReference>
<dbReference type="SUPFAM" id="SSF54821">
    <property type="entry name" value="Ribosomal protein S3 C-terminal domain"/>
    <property type="match status" value="1"/>
</dbReference>
<dbReference type="PROSITE" id="PS50823">
    <property type="entry name" value="KH_TYPE_2"/>
    <property type="match status" value="1"/>
</dbReference>
<dbReference type="PROSITE" id="PS00548">
    <property type="entry name" value="RIBOSOMAL_S3"/>
    <property type="match status" value="1"/>
</dbReference>
<accession>P66553</accession>
<accession>Q99S27</accession>
<protein>
    <recommendedName>
        <fullName evidence="1">Small ribosomal subunit protein uS3</fullName>
    </recommendedName>
    <alternativeName>
        <fullName evidence="2">30S ribosomal protein S3</fullName>
    </alternativeName>
</protein>
<feature type="chain" id="PRO_0000130199" description="Small ribosomal subunit protein uS3">
    <location>
        <begin position="1"/>
        <end position="217"/>
    </location>
</feature>
<feature type="domain" description="KH type-2" evidence="1">
    <location>
        <begin position="38"/>
        <end position="106"/>
    </location>
</feature>
<sequence length="217" mass="24100">MGQKINPIGLRVGIIRDWEAKWYAEKDFASLLHEDLKIRKFIDNELKEASVSHVEIERAANRINIAIHTGKPGMVIGKGGSEIEKLRNKLNALTDKKVHINVIEIKKVDLDARLVAENIARQLENRASFRRVQKQAITRAMKLGAKGIKTQVSGRLGGADIARAEQYSEGTVPLHTLRADIDYAHAEADTTYGKLGVKVWIYRGEVLPTKNTSGGGK</sequence>
<proteinExistence type="evidence at protein level"/>
<organism>
    <name type="scientific">Staphylococcus aureus (strain N315)</name>
    <dbReference type="NCBI Taxonomy" id="158879"/>
    <lineage>
        <taxon>Bacteria</taxon>
        <taxon>Bacillati</taxon>
        <taxon>Bacillota</taxon>
        <taxon>Bacilli</taxon>
        <taxon>Bacillales</taxon>
        <taxon>Staphylococcaceae</taxon>
        <taxon>Staphylococcus</taxon>
    </lineage>
</organism>
<evidence type="ECO:0000255" key="1">
    <source>
        <dbReference type="HAMAP-Rule" id="MF_01309"/>
    </source>
</evidence>
<evidence type="ECO:0000305" key="2"/>
<name>RS3_STAAN</name>
<comment type="function">
    <text evidence="1">Binds the lower part of the 30S subunit head. Binds mRNA in the 70S ribosome, positioning it for translation.</text>
</comment>
<comment type="subunit">
    <text evidence="1">Part of the 30S ribosomal subunit. Forms a tight complex with proteins S10 and S14.</text>
</comment>
<comment type="similarity">
    <text evidence="1">Belongs to the universal ribosomal protein uS3 family.</text>
</comment>
<reference key="1">
    <citation type="journal article" date="2001" name="Lancet">
        <title>Whole genome sequencing of meticillin-resistant Staphylococcus aureus.</title>
        <authorList>
            <person name="Kuroda M."/>
            <person name="Ohta T."/>
            <person name="Uchiyama I."/>
            <person name="Baba T."/>
            <person name="Yuzawa H."/>
            <person name="Kobayashi I."/>
            <person name="Cui L."/>
            <person name="Oguchi A."/>
            <person name="Aoki K."/>
            <person name="Nagai Y."/>
            <person name="Lian J.-Q."/>
            <person name="Ito T."/>
            <person name="Kanamori M."/>
            <person name="Matsumaru H."/>
            <person name="Maruyama A."/>
            <person name="Murakami H."/>
            <person name="Hosoyama A."/>
            <person name="Mizutani-Ui Y."/>
            <person name="Takahashi N.K."/>
            <person name="Sawano T."/>
            <person name="Inoue R."/>
            <person name="Kaito C."/>
            <person name="Sekimizu K."/>
            <person name="Hirakawa H."/>
            <person name="Kuhara S."/>
            <person name="Goto S."/>
            <person name="Yabuzaki J."/>
            <person name="Kanehisa M."/>
            <person name="Yamashita A."/>
            <person name="Oshima K."/>
            <person name="Furuya K."/>
            <person name="Yoshino C."/>
            <person name="Shiba T."/>
            <person name="Hattori M."/>
            <person name="Ogasawara N."/>
            <person name="Hayashi H."/>
            <person name="Hiramatsu K."/>
        </authorList>
    </citation>
    <scope>NUCLEOTIDE SEQUENCE [LARGE SCALE GENOMIC DNA]</scope>
    <source>
        <strain>N315</strain>
    </source>
</reference>
<reference key="2">
    <citation type="submission" date="2005-11" db="UniProtKB">
        <title>Shotgun proteomic analysis of total protein extract of S. aureus S30 versus N315.</title>
        <authorList>
            <person name="Stenz L."/>
        </authorList>
    </citation>
    <scope>IDENTIFICATION BY MASS SPECTROMETRY</scope>
</reference>
<reference key="3">
    <citation type="submission" date="2007-10" db="UniProtKB">
        <title>Shotgun proteomic analysis of total and membrane protein extracts of S. aureus strain N315.</title>
        <authorList>
            <person name="Vaezzadeh A.R."/>
            <person name="Deshusses J."/>
            <person name="Lescuyer P."/>
            <person name="Hochstrasser D.F."/>
        </authorList>
    </citation>
    <scope>IDENTIFICATION BY MASS SPECTROMETRY [LARGE SCALE ANALYSIS]</scope>
    <source>
        <strain>N315</strain>
    </source>
</reference>